<keyword id="KW-0963">Cytoplasm</keyword>
<keyword id="KW-0312">Gluconeogenesis</keyword>
<keyword id="KW-0324">Glycolysis</keyword>
<keyword id="KW-0413">Isomerase</keyword>
<keyword id="KW-1185">Reference proteome</keyword>
<organism>
    <name type="scientific">Haloarcula marismortui (strain ATCC 43049 / DSM 3752 / JCM 8966 / VKM B-1809)</name>
    <name type="common">Halobacterium marismortui</name>
    <dbReference type="NCBI Taxonomy" id="272569"/>
    <lineage>
        <taxon>Archaea</taxon>
        <taxon>Methanobacteriati</taxon>
        <taxon>Methanobacteriota</taxon>
        <taxon>Stenosarchaea group</taxon>
        <taxon>Halobacteria</taxon>
        <taxon>Halobacteriales</taxon>
        <taxon>Haloarculaceae</taxon>
        <taxon>Haloarcula</taxon>
    </lineage>
</organism>
<sequence length="436" mass="46180">MHVDIGAALASAADPGVERATLDDLDEQVAVAHERIEQGRNKGEFGYASLNLLEATDAETIHDAVAPVADAESVITVGIGGSALGAKTITEALAEDPGSHVVLDNVDPEHVRRTLDGLSLADTAINVVSRSGTTAETLANFLVVREAYEDRGVDWTERIVVTTGESGPLRALADQHDLPTLPVPEGVPGRFSALSAVGLVPPAILGIDIEGLLAGGQQAADDLAPSLYDSPAYAYGAMAYALEEAGATVNAVMPYAERLESFGEWFAQLWAESLGKDGRGQTPARALGATDQHSQLQLYRAGHRDKVVTFVRPRERADVSIPDPDHEDLSYLAGTDLGGLIDAEYEATVASLPAADRPALEVEIDRLDAESVGELLYAMEAACVLVGELADVETFTQPAVEWGKNATRALIRGEATDETAVIDERERLRIGETESL</sequence>
<reference key="1">
    <citation type="journal article" date="2004" name="Genome Res.">
        <title>Genome sequence of Haloarcula marismortui: a halophilic archaeon from the Dead Sea.</title>
        <authorList>
            <person name="Baliga N.S."/>
            <person name="Bonneau R."/>
            <person name="Facciotti M.T."/>
            <person name="Pan M."/>
            <person name="Glusman G."/>
            <person name="Deutsch E.W."/>
            <person name="Shannon P."/>
            <person name="Chiu Y."/>
            <person name="Weng R.S."/>
            <person name="Gan R.R."/>
            <person name="Hung P."/>
            <person name="Date S.V."/>
            <person name="Marcotte E."/>
            <person name="Hood L."/>
            <person name="Ng W.V."/>
        </authorList>
    </citation>
    <scope>NUCLEOTIDE SEQUENCE [LARGE SCALE GENOMIC DNA]</scope>
    <source>
        <strain>ATCC 43049 / DSM 3752 / JCM 8966 / VKM B-1809</strain>
    </source>
</reference>
<proteinExistence type="inferred from homology"/>
<name>G6PI_HALMA</name>
<evidence type="ECO:0000255" key="1">
    <source>
        <dbReference type="HAMAP-Rule" id="MF_00473"/>
    </source>
</evidence>
<evidence type="ECO:0000305" key="2"/>
<feature type="chain" id="PRO_0000180778" description="Probable glucose-6-phosphate isomerase">
    <location>
        <begin position="1"/>
        <end position="436"/>
    </location>
</feature>
<feature type="active site" description="Proton donor" evidence="1">
    <location>
        <position position="272"/>
    </location>
</feature>
<feature type="active site" evidence="1">
    <location>
        <position position="293"/>
    </location>
</feature>
<feature type="active site" evidence="1">
    <location>
        <position position="404"/>
    </location>
</feature>
<comment type="function">
    <text evidence="1">Catalyzes the reversible isomerization of glucose-6-phosphate to fructose-6-phosphate.</text>
</comment>
<comment type="catalytic activity">
    <reaction evidence="1">
        <text>alpha-D-glucose 6-phosphate = beta-D-fructose 6-phosphate</text>
        <dbReference type="Rhea" id="RHEA:11816"/>
        <dbReference type="ChEBI" id="CHEBI:57634"/>
        <dbReference type="ChEBI" id="CHEBI:58225"/>
        <dbReference type="EC" id="5.3.1.9"/>
    </reaction>
</comment>
<comment type="pathway">
    <text evidence="1">Carbohydrate biosynthesis; gluconeogenesis.</text>
</comment>
<comment type="pathway">
    <text evidence="1">Carbohydrate degradation; glycolysis; D-glyceraldehyde 3-phosphate and glycerone phosphate from D-glucose: step 2/4.</text>
</comment>
<comment type="subcellular location">
    <subcellularLocation>
        <location evidence="1">Cytoplasm</location>
    </subcellularLocation>
</comment>
<comment type="similarity">
    <text evidence="1">Belongs to the GPI family.</text>
</comment>
<comment type="sequence caution" evidence="2">
    <conflict type="erroneous initiation">
        <sequence resource="EMBL-CDS" id="AAV47913"/>
    </conflict>
</comment>
<gene>
    <name evidence="1" type="primary">pgi</name>
    <name type="ordered locus">rrnAC3210</name>
</gene>
<dbReference type="EC" id="5.3.1.9" evidence="1"/>
<dbReference type="EMBL" id="AY596297">
    <property type="protein sequence ID" value="AAV47913.1"/>
    <property type="status" value="ALT_INIT"/>
    <property type="molecule type" value="Genomic_DNA"/>
</dbReference>
<dbReference type="RefSeq" id="WP_049939089.1">
    <property type="nucleotide sequence ID" value="NC_006396.1"/>
</dbReference>
<dbReference type="SMR" id="Q5UXU0"/>
<dbReference type="STRING" id="272569.rrnAC3210"/>
<dbReference type="PaxDb" id="272569-rrnAC3210"/>
<dbReference type="EnsemblBacteria" id="AAV47913">
    <property type="protein sequence ID" value="AAV47913"/>
    <property type="gene ID" value="rrnAC3210"/>
</dbReference>
<dbReference type="GeneID" id="40154013"/>
<dbReference type="KEGG" id="hma:rrnAC3210"/>
<dbReference type="PATRIC" id="fig|272569.17.peg.3747"/>
<dbReference type="eggNOG" id="arCOG00052">
    <property type="taxonomic scope" value="Archaea"/>
</dbReference>
<dbReference type="HOGENOM" id="CLU_037303_1_0_2"/>
<dbReference type="UniPathway" id="UPA00109">
    <property type="reaction ID" value="UER00181"/>
</dbReference>
<dbReference type="UniPathway" id="UPA00138"/>
<dbReference type="Proteomes" id="UP000001169">
    <property type="component" value="Chromosome I"/>
</dbReference>
<dbReference type="GO" id="GO:0005829">
    <property type="term" value="C:cytosol"/>
    <property type="evidence" value="ECO:0007669"/>
    <property type="project" value="TreeGrafter"/>
</dbReference>
<dbReference type="GO" id="GO:0097367">
    <property type="term" value="F:carbohydrate derivative binding"/>
    <property type="evidence" value="ECO:0007669"/>
    <property type="project" value="InterPro"/>
</dbReference>
<dbReference type="GO" id="GO:0004347">
    <property type="term" value="F:glucose-6-phosphate isomerase activity"/>
    <property type="evidence" value="ECO:0007669"/>
    <property type="project" value="UniProtKB-UniRule"/>
</dbReference>
<dbReference type="GO" id="GO:0048029">
    <property type="term" value="F:monosaccharide binding"/>
    <property type="evidence" value="ECO:0007669"/>
    <property type="project" value="TreeGrafter"/>
</dbReference>
<dbReference type="GO" id="GO:0006094">
    <property type="term" value="P:gluconeogenesis"/>
    <property type="evidence" value="ECO:0007669"/>
    <property type="project" value="UniProtKB-UniRule"/>
</dbReference>
<dbReference type="GO" id="GO:0051156">
    <property type="term" value="P:glucose 6-phosphate metabolic process"/>
    <property type="evidence" value="ECO:0007669"/>
    <property type="project" value="TreeGrafter"/>
</dbReference>
<dbReference type="GO" id="GO:0006096">
    <property type="term" value="P:glycolytic process"/>
    <property type="evidence" value="ECO:0007669"/>
    <property type="project" value="UniProtKB-UniRule"/>
</dbReference>
<dbReference type="CDD" id="cd05015">
    <property type="entry name" value="SIS_PGI_1"/>
    <property type="match status" value="1"/>
</dbReference>
<dbReference type="CDD" id="cd05016">
    <property type="entry name" value="SIS_PGI_2"/>
    <property type="match status" value="1"/>
</dbReference>
<dbReference type="Gene3D" id="3.40.50.10490">
    <property type="entry name" value="Glucose-6-phosphate isomerase like protein, domain 1"/>
    <property type="match status" value="2"/>
</dbReference>
<dbReference type="HAMAP" id="MF_00473">
    <property type="entry name" value="G6P_isomerase"/>
    <property type="match status" value="1"/>
</dbReference>
<dbReference type="InterPro" id="IPR001672">
    <property type="entry name" value="G6P_Isomerase"/>
</dbReference>
<dbReference type="InterPro" id="IPR018189">
    <property type="entry name" value="Phosphoglucose_isomerase_CS"/>
</dbReference>
<dbReference type="InterPro" id="IPR046348">
    <property type="entry name" value="SIS_dom_sf"/>
</dbReference>
<dbReference type="InterPro" id="IPR035476">
    <property type="entry name" value="SIS_PGI_1"/>
</dbReference>
<dbReference type="InterPro" id="IPR035482">
    <property type="entry name" value="SIS_PGI_2"/>
</dbReference>
<dbReference type="PANTHER" id="PTHR11469">
    <property type="entry name" value="GLUCOSE-6-PHOSPHATE ISOMERASE"/>
    <property type="match status" value="1"/>
</dbReference>
<dbReference type="PANTHER" id="PTHR11469:SF1">
    <property type="entry name" value="GLUCOSE-6-PHOSPHATE ISOMERASE"/>
    <property type="match status" value="1"/>
</dbReference>
<dbReference type="Pfam" id="PF00342">
    <property type="entry name" value="PGI"/>
    <property type="match status" value="1"/>
</dbReference>
<dbReference type="PRINTS" id="PR00662">
    <property type="entry name" value="G6PISOMERASE"/>
</dbReference>
<dbReference type="SUPFAM" id="SSF53697">
    <property type="entry name" value="SIS domain"/>
    <property type="match status" value="1"/>
</dbReference>
<dbReference type="PROSITE" id="PS00765">
    <property type="entry name" value="P_GLUCOSE_ISOMERASE_1"/>
    <property type="match status" value="1"/>
</dbReference>
<dbReference type="PROSITE" id="PS51463">
    <property type="entry name" value="P_GLUCOSE_ISOMERASE_3"/>
    <property type="match status" value="1"/>
</dbReference>
<protein>
    <recommendedName>
        <fullName evidence="1">Probable glucose-6-phosphate isomerase</fullName>
        <shortName evidence="1">GPI</shortName>
        <ecNumber evidence="1">5.3.1.9</ecNumber>
    </recommendedName>
    <alternativeName>
        <fullName evidence="1">Phosphoglucose isomerase</fullName>
        <shortName evidence="1">PGI</shortName>
    </alternativeName>
    <alternativeName>
        <fullName evidence="1">Phosphohexose isomerase</fullName>
        <shortName evidence="1">PHI</shortName>
    </alternativeName>
</protein>
<accession>Q5UXU0</accession>